<organism>
    <name type="scientific">Homo sapiens</name>
    <name type="common">Human</name>
    <dbReference type="NCBI Taxonomy" id="9606"/>
    <lineage>
        <taxon>Eukaryota</taxon>
        <taxon>Metazoa</taxon>
        <taxon>Chordata</taxon>
        <taxon>Craniata</taxon>
        <taxon>Vertebrata</taxon>
        <taxon>Euteleostomi</taxon>
        <taxon>Mammalia</taxon>
        <taxon>Eutheria</taxon>
        <taxon>Euarchontoglires</taxon>
        <taxon>Primates</taxon>
        <taxon>Haplorrhini</taxon>
        <taxon>Catarrhini</taxon>
        <taxon>Hominidae</taxon>
        <taxon>Homo</taxon>
    </lineage>
</organism>
<protein>
    <recommendedName>
        <fullName>Tyrosine-protein phosphatase non-receptor type 23</fullName>
        <ecNumber>3.1.3.48</ecNumber>
    </recommendedName>
    <alternativeName>
        <fullName>His domain-containing protein tyrosine phosphatase</fullName>
        <shortName>HD-PTP</shortName>
    </alternativeName>
    <alternativeName>
        <fullName>Protein tyrosine phosphatase TD14</fullName>
        <shortName>PTP-TD14</shortName>
    </alternativeName>
</protein>
<reference key="1">
    <citation type="journal article" date="2000" name="Biochem. Biophys. Res. Commun.">
        <title>HD-PTP: a novel protein tyrosine phosphatase gene on human chromosome 3p21.3.</title>
        <authorList>
            <person name="Toyooka S."/>
            <person name="Ouchida M."/>
            <person name="Jitsumori Y."/>
            <person name="Tsukuda K."/>
            <person name="Sakai A."/>
            <person name="Nakamura A."/>
            <person name="Shimizu N."/>
            <person name="Shimizu K."/>
        </authorList>
    </citation>
    <scope>NUCLEOTIDE SEQUENCE [MRNA]</scope>
    <scope>VARIANT SER-1099</scope>
    <scope>SUBCELLULAR LOCATION</scope>
    <source>
        <tissue>Stomach cancer</tissue>
    </source>
</reference>
<reference key="2">
    <citation type="submission" date="2000-07" db="EMBL/GenBank/DDBJ databases">
        <title>Cloning, chromosomal assignment and tissue expression of a novel human protein tyrosine phosphatase (PTP-TD14) gene.</title>
        <authorList>
            <person name="Qu X."/>
            <person name="Zhai Y."/>
            <person name="Wei H."/>
            <person name="Zhang C."/>
            <person name="Xing G."/>
            <person name="Lu C."/>
            <person name="Wang M."/>
            <person name="He F."/>
        </authorList>
    </citation>
    <scope>NUCLEOTIDE SEQUENCE [MRNA]</scope>
    <source>
        <tissue>Liver</tissue>
    </source>
</reference>
<reference key="3">
    <citation type="journal article" date="2004" name="Nat. Genet.">
        <title>Complete sequencing and characterization of 21,243 full-length human cDNAs.</title>
        <authorList>
            <person name="Ota T."/>
            <person name="Suzuki Y."/>
            <person name="Nishikawa T."/>
            <person name="Otsuki T."/>
            <person name="Sugiyama T."/>
            <person name="Irie R."/>
            <person name="Wakamatsu A."/>
            <person name="Hayashi K."/>
            <person name="Sato H."/>
            <person name="Nagai K."/>
            <person name="Kimura K."/>
            <person name="Makita H."/>
            <person name="Sekine M."/>
            <person name="Obayashi M."/>
            <person name="Nishi T."/>
            <person name="Shibahara T."/>
            <person name="Tanaka T."/>
            <person name="Ishii S."/>
            <person name="Yamamoto J."/>
            <person name="Saito K."/>
            <person name="Kawai Y."/>
            <person name="Isono Y."/>
            <person name="Nakamura Y."/>
            <person name="Nagahari K."/>
            <person name="Murakami K."/>
            <person name="Yasuda T."/>
            <person name="Iwayanagi T."/>
            <person name="Wagatsuma M."/>
            <person name="Shiratori A."/>
            <person name="Sudo H."/>
            <person name="Hosoiri T."/>
            <person name="Kaku Y."/>
            <person name="Kodaira H."/>
            <person name="Kondo H."/>
            <person name="Sugawara M."/>
            <person name="Takahashi M."/>
            <person name="Kanda K."/>
            <person name="Yokoi T."/>
            <person name="Furuya T."/>
            <person name="Kikkawa E."/>
            <person name="Omura Y."/>
            <person name="Abe K."/>
            <person name="Kamihara K."/>
            <person name="Katsuta N."/>
            <person name="Sato K."/>
            <person name="Tanikawa M."/>
            <person name="Yamazaki M."/>
            <person name="Ninomiya K."/>
            <person name="Ishibashi T."/>
            <person name="Yamashita H."/>
            <person name="Murakawa K."/>
            <person name="Fujimori K."/>
            <person name="Tanai H."/>
            <person name="Kimata M."/>
            <person name="Watanabe M."/>
            <person name="Hiraoka S."/>
            <person name="Chiba Y."/>
            <person name="Ishida S."/>
            <person name="Ono Y."/>
            <person name="Takiguchi S."/>
            <person name="Watanabe S."/>
            <person name="Yosida M."/>
            <person name="Hotuta T."/>
            <person name="Kusano J."/>
            <person name="Kanehori K."/>
            <person name="Takahashi-Fujii A."/>
            <person name="Hara H."/>
            <person name="Tanase T.-O."/>
            <person name="Nomura Y."/>
            <person name="Togiya S."/>
            <person name="Komai F."/>
            <person name="Hara R."/>
            <person name="Takeuchi K."/>
            <person name="Arita M."/>
            <person name="Imose N."/>
            <person name="Musashino K."/>
            <person name="Yuuki H."/>
            <person name="Oshima A."/>
            <person name="Sasaki N."/>
            <person name="Aotsuka S."/>
            <person name="Yoshikawa Y."/>
            <person name="Matsunawa H."/>
            <person name="Ichihara T."/>
            <person name="Shiohata N."/>
            <person name="Sano S."/>
            <person name="Moriya S."/>
            <person name="Momiyama H."/>
            <person name="Satoh N."/>
            <person name="Takami S."/>
            <person name="Terashima Y."/>
            <person name="Suzuki O."/>
            <person name="Nakagawa S."/>
            <person name="Senoh A."/>
            <person name="Mizoguchi H."/>
            <person name="Goto Y."/>
            <person name="Shimizu F."/>
            <person name="Wakebe H."/>
            <person name="Hishigaki H."/>
            <person name="Watanabe T."/>
            <person name="Sugiyama A."/>
            <person name="Takemoto M."/>
            <person name="Kawakami B."/>
            <person name="Yamazaki M."/>
            <person name="Watanabe K."/>
            <person name="Kumagai A."/>
            <person name="Itakura S."/>
            <person name="Fukuzumi Y."/>
            <person name="Fujimori Y."/>
            <person name="Komiyama M."/>
            <person name="Tashiro H."/>
            <person name="Tanigami A."/>
            <person name="Fujiwara T."/>
            <person name="Ono T."/>
            <person name="Yamada K."/>
            <person name="Fujii Y."/>
            <person name="Ozaki K."/>
            <person name="Hirao M."/>
            <person name="Ohmori Y."/>
            <person name="Kawabata A."/>
            <person name="Hikiji T."/>
            <person name="Kobatake N."/>
            <person name="Inagaki H."/>
            <person name="Ikema Y."/>
            <person name="Okamoto S."/>
            <person name="Okitani R."/>
            <person name="Kawakami T."/>
            <person name="Noguchi S."/>
            <person name="Itoh T."/>
            <person name="Shigeta K."/>
            <person name="Senba T."/>
            <person name="Matsumura K."/>
            <person name="Nakajima Y."/>
            <person name="Mizuno T."/>
            <person name="Morinaga M."/>
            <person name="Sasaki M."/>
            <person name="Togashi T."/>
            <person name="Oyama M."/>
            <person name="Hata H."/>
            <person name="Watanabe M."/>
            <person name="Komatsu T."/>
            <person name="Mizushima-Sugano J."/>
            <person name="Satoh T."/>
            <person name="Shirai Y."/>
            <person name="Takahashi Y."/>
            <person name="Nakagawa K."/>
            <person name="Okumura K."/>
            <person name="Nagase T."/>
            <person name="Nomura N."/>
            <person name="Kikuchi H."/>
            <person name="Masuho Y."/>
            <person name="Yamashita R."/>
            <person name="Nakai K."/>
            <person name="Yada T."/>
            <person name="Nakamura Y."/>
            <person name="Ohara O."/>
            <person name="Isogai T."/>
            <person name="Sugano S."/>
        </authorList>
    </citation>
    <scope>NUCLEOTIDE SEQUENCE [LARGE SCALE MRNA]</scope>
    <source>
        <tissue>Cerebellum</tissue>
    </source>
</reference>
<reference key="4">
    <citation type="submission" date="2005-07" db="EMBL/GenBank/DDBJ databases">
        <authorList>
            <person name="Mural R.J."/>
            <person name="Istrail S."/>
            <person name="Sutton G.G."/>
            <person name="Florea L."/>
            <person name="Halpern A.L."/>
            <person name="Mobarry C.M."/>
            <person name="Lippert R."/>
            <person name="Walenz B."/>
            <person name="Shatkay H."/>
            <person name="Dew I."/>
            <person name="Miller J.R."/>
            <person name="Flanigan M.J."/>
            <person name="Edwards N.J."/>
            <person name="Bolanos R."/>
            <person name="Fasulo D."/>
            <person name="Halldorsson B.V."/>
            <person name="Hannenhalli S."/>
            <person name="Turner R."/>
            <person name="Yooseph S."/>
            <person name="Lu F."/>
            <person name="Nusskern D.R."/>
            <person name="Shue B.C."/>
            <person name="Zheng X.H."/>
            <person name="Zhong F."/>
            <person name="Delcher A.L."/>
            <person name="Huson D.H."/>
            <person name="Kravitz S.A."/>
            <person name="Mouchard L."/>
            <person name="Reinert K."/>
            <person name="Remington K.A."/>
            <person name="Clark A.G."/>
            <person name="Waterman M.S."/>
            <person name="Eichler E.E."/>
            <person name="Adams M.D."/>
            <person name="Hunkapiller M.W."/>
            <person name="Myers E.W."/>
            <person name="Venter J.C."/>
        </authorList>
    </citation>
    <scope>NUCLEOTIDE SEQUENCE [LARGE SCALE GENOMIC DNA]</scope>
</reference>
<reference key="5">
    <citation type="journal article" date="2004" name="Genome Res.">
        <title>The status, quality, and expansion of the NIH full-length cDNA project: the Mammalian Gene Collection (MGC).</title>
        <authorList>
            <consortium name="The MGC Project Team"/>
        </authorList>
    </citation>
    <scope>NUCLEOTIDE SEQUENCE [LARGE SCALE MRNA]</scope>
    <source>
        <tissue>Muscle</tissue>
        <tissue>Ovary</tissue>
        <tissue>Skin</tissue>
    </source>
</reference>
<reference key="6">
    <citation type="journal article" date="2000" name="DNA Res.">
        <title>Prediction of the coding sequences of unidentified human genes. XVII. The complete sequences of 100 new cDNA clones from brain which code for large proteins in vitro.</title>
        <authorList>
            <person name="Nagase T."/>
            <person name="Kikuno R."/>
            <person name="Ishikawa K."/>
            <person name="Hirosawa M."/>
            <person name="Ohara O."/>
        </authorList>
    </citation>
    <scope>NUCLEOTIDE SEQUENCE [LARGE SCALE MRNA] OF 1-1383</scope>
    <scope>VARIANT THR-944</scope>
    <source>
        <tissue>Brain</tissue>
    </source>
</reference>
<reference key="7">
    <citation type="journal article" date="2002" name="DNA Res.">
        <title>Construction of expression-ready cDNA clones for KIAA genes: manual curation of 330 KIAA cDNA clones.</title>
        <authorList>
            <person name="Nakajima D."/>
            <person name="Okazaki N."/>
            <person name="Yamakawa H."/>
            <person name="Kikuno R."/>
            <person name="Ohara O."/>
            <person name="Nagase T."/>
        </authorList>
    </citation>
    <scope>SEQUENCE REVISION</scope>
</reference>
<reference key="8">
    <citation type="journal article" date="2007" name="BMC Genomics">
        <title>The full-ORF clone resource of the German cDNA consortium.</title>
        <authorList>
            <person name="Bechtel S."/>
            <person name="Rosenfelder H."/>
            <person name="Duda A."/>
            <person name="Schmidt C.P."/>
            <person name="Ernst U."/>
            <person name="Wellenreuther R."/>
            <person name="Mehrle A."/>
            <person name="Schuster C."/>
            <person name="Bahr A."/>
            <person name="Bloecker H."/>
            <person name="Heubner D."/>
            <person name="Hoerlein A."/>
            <person name="Michel G."/>
            <person name="Wedler H."/>
            <person name="Koehrer K."/>
            <person name="Ottenwaelder B."/>
            <person name="Poustka A."/>
            <person name="Wiemann S."/>
            <person name="Schupp I."/>
        </authorList>
    </citation>
    <scope>NUCLEOTIDE SEQUENCE [LARGE SCALE MRNA] OF 647-1636</scope>
    <scope>VARIANT THR-944</scope>
    <source>
        <tissue>Brain</tissue>
    </source>
</reference>
<reference key="9">
    <citation type="submission" date="2003-08" db="EMBL/GenBank/DDBJ databases">
        <title>Cloning of human full-length CDSs in BD Creator(TM) system donor vector.</title>
        <authorList>
            <person name="Kalnine N."/>
            <person name="Chen X."/>
            <person name="Rolfs A."/>
            <person name="Halleck A."/>
            <person name="Hines L."/>
            <person name="Eisenstein S."/>
            <person name="Koundinya M."/>
            <person name="Raphael J."/>
            <person name="Moreira D."/>
            <person name="Kelley T."/>
            <person name="LaBaer J."/>
            <person name="Lin Y."/>
            <person name="Phelan M."/>
            <person name="Farmer A."/>
        </authorList>
    </citation>
    <scope>NUCLEOTIDE SEQUENCE [LARGE SCALE MRNA] OF 1060-1636</scope>
</reference>
<reference key="10">
    <citation type="submission" date="1999-07" db="EMBL/GenBank/DDBJ databases">
        <title>Differential expression of PTPase RNAs resulting from K562 differentiation induced by PMA.</title>
        <authorList>
            <person name="Dayton M.A."/>
            <person name="Blanchard K.L."/>
        </authorList>
    </citation>
    <scope>NUCLEOTIDE SEQUENCE [MRNA] OF 1351-1493</scope>
</reference>
<reference key="11">
    <citation type="journal article" date="2008" name="Proc. Natl. Acad. Sci. U.S.A.">
        <title>A quantitative atlas of mitotic phosphorylation.</title>
        <authorList>
            <person name="Dephoure N."/>
            <person name="Zhou C."/>
            <person name="Villen J."/>
            <person name="Beausoleil S.A."/>
            <person name="Bakalarski C.E."/>
            <person name="Elledge S.J."/>
            <person name="Gygi S.P."/>
        </authorList>
    </citation>
    <scope>PHOSPHORYLATION [LARGE SCALE ANALYSIS] AT SER-1123</scope>
    <scope>IDENTIFICATION BY MASS SPECTROMETRY [LARGE SCALE ANALYSIS]</scope>
    <source>
        <tissue>Cervix carcinoma</tissue>
    </source>
</reference>
<reference key="12">
    <citation type="journal article" date="2008" name="Proc. Natl. Acad. Sci. U.S.A.">
        <title>The Bro1-related protein HD-PTP/PTPN23 is required for endosomal cargo sorting and multivesicular body morphogenesis.</title>
        <authorList>
            <person name="Doyotte A."/>
            <person name="Mironov A."/>
            <person name="McKenzie E."/>
            <person name="Woodman P."/>
        </authorList>
    </citation>
    <scope>FUNCTION</scope>
    <scope>INTERACTION WITH CHMP4B</scope>
    <scope>SUBCELLULAR LOCATION</scope>
    <scope>MUTAGENESIS OF LEU-202 AND ILE-206</scope>
</reference>
<reference key="13">
    <citation type="journal article" date="2009" name="Sci. Signal.">
        <title>Quantitative phosphoproteomic analysis of T cell receptor signaling reveals system-wide modulation of protein-protein interactions.</title>
        <authorList>
            <person name="Mayya V."/>
            <person name="Lundgren D.H."/>
            <person name="Hwang S.-I."/>
            <person name="Rezaul K."/>
            <person name="Wu L."/>
            <person name="Eng J.K."/>
            <person name="Rodionov V."/>
            <person name="Han D.K."/>
        </authorList>
    </citation>
    <scope>PHOSPHORYLATION [LARGE SCALE ANALYSIS] AT SER-1123</scope>
    <scope>IDENTIFICATION BY MASS SPECTROMETRY [LARGE SCALE ANALYSIS]</scope>
    <source>
        <tissue>Leukemic T-cell</tissue>
    </source>
</reference>
<reference key="14">
    <citation type="journal article" date="2010" name="Nature">
        <title>Functional genomic screen for modulators of ciliogenesis and cilium length.</title>
        <authorList>
            <person name="Kim J."/>
            <person name="Lee J.E."/>
            <person name="Heynen-Genel S."/>
            <person name="Suyama E."/>
            <person name="Ono K."/>
            <person name="Lee K."/>
            <person name="Ideker T."/>
            <person name="Aza-Blanc P."/>
            <person name="Gleeson J.G."/>
        </authorList>
    </citation>
    <scope>FUNCTION</scope>
    <scope>SUBCELLULAR LOCATION</scope>
</reference>
<reference key="15">
    <citation type="journal article" date="2010" name="PLoS ONE">
        <title>Histidine domain-protein tyrosine phosphatase interacts with Grb2 and GrpL.</title>
        <authorList>
            <person name="Tanase C.A."/>
        </authorList>
    </citation>
    <scope>INTERACTION WITH GRAP2 AND GRB2</scope>
    <scope>SUBCELLULAR LOCATION</scope>
</reference>
<reference key="16">
    <citation type="journal article" date="2010" name="Sci. Signal.">
        <title>Quantitative phosphoproteomics reveals widespread full phosphorylation site occupancy during mitosis.</title>
        <authorList>
            <person name="Olsen J.V."/>
            <person name="Vermeulen M."/>
            <person name="Santamaria A."/>
            <person name="Kumar C."/>
            <person name="Miller M.L."/>
            <person name="Jensen L.J."/>
            <person name="Gnad F."/>
            <person name="Cox J."/>
            <person name="Jensen T.S."/>
            <person name="Nigg E.A."/>
            <person name="Brunak S."/>
            <person name="Mann M."/>
        </authorList>
    </citation>
    <scope>IDENTIFICATION BY MASS SPECTROMETRY [LARGE SCALE ANALYSIS]</scope>
    <source>
        <tissue>Cervix carcinoma</tissue>
    </source>
</reference>
<reference key="17">
    <citation type="journal article" date="2011" name="BMC Syst. Biol.">
        <title>Initial characterization of the human central proteome.</title>
        <authorList>
            <person name="Burkard T.R."/>
            <person name="Planyavsky M."/>
            <person name="Kaupe I."/>
            <person name="Breitwieser F.P."/>
            <person name="Buerckstuemmer T."/>
            <person name="Bennett K.L."/>
            <person name="Superti-Furga G."/>
            <person name="Colinge J."/>
        </authorList>
    </citation>
    <scope>IDENTIFICATION BY MASS SPECTROMETRY [LARGE SCALE ANALYSIS]</scope>
</reference>
<reference key="18">
    <citation type="journal article" date="2011" name="Curr. Biol.">
        <title>UBAP1 is a component of an endosome-specific ESCRT-I complex that is essential for MVB sorting.</title>
        <authorList>
            <person name="Stefani F."/>
            <person name="Zhang L."/>
            <person name="Taylor S."/>
            <person name="Donovan J."/>
            <person name="Rollinson S."/>
            <person name="Doyotte A."/>
            <person name="Brownhill K."/>
            <person name="Bennion J."/>
            <person name="Pickering-Brown S."/>
            <person name="Woodman P."/>
        </authorList>
    </citation>
    <scope>FUNCTION</scope>
    <scope>INTERACTION WITH UBAP1</scope>
    <scope>SUBCELLULAR LOCATION</scope>
    <scope>MUTAGENESIS OF PHE-678</scope>
</reference>
<reference key="19">
    <citation type="journal article" date="2011" name="Sci. Signal.">
        <title>System-wide temporal characterization of the proteome and phosphoproteome of human embryonic stem cell differentiation.</title>
        <authorList>
            <person name="Rigbolt K.T."/>
            <person name="Prokhorova T.A."/>
            <person name="Akimov V."/>
            <person name="Henningsen J."/>
            <person name="Johansen P.T."/>
            <person name="Kratchmarova I."/>
            <person name="Kassem M."/>
            <person name="Mann M."/>
            <person name="Olsen J.V."/>
            <person name="Blagoev B."/>
        </authorList>
    </citation>
    <scope>IDENTIFICATION BY MASS SPECTROMETRY [LARGE SCALE ANALYSIS]</scope>
</reference>
<reference key="20">
    <citation type="journal article" date="2013" name="J. Proteome Res.">
        <title>Toward a comprehensive characterization of a human cancer cell phosphoproteome.</title>
        <authorList>
            <person name="Zhou H."/>
            <person name="Di Palma S."/>
            <person name="Preisinger C."/>
            <person name="Peng M."/>
            <person name="Polat A.N."/>
            <person name="Heck A.J."/>
            <person name="Mohammed S."/>
        </authorList>
    </citation>
    <scope>PHOSPHORYLATION [LARGE SCALE ANALYSIS] AT SER-733</scope>
    <scope>IDENTIFICATION BY MASS SPECTROMETRY [LARGE SCALE ANALYSIS]</scope>
    <source>
        <tissue>Cervix carcinoma</tissue>
        <tissue>Erythroleukemia</tissue>
    </source>
</reference>
<reference key="21">
    <citation type="journal article" date="2014" name="J. Proteomics">
        <title>An enzyme assisted RP-RPLC approach for in-depth analysis of human liver phosphoproteome.</title>
        <authorList>
            <person name="Bian Y."/>
            <person name="Song C."/>
            <person name="Cheng K."/>
            <person name="Dong M."/>
            <person name="Wang F."/>
            <person name="Huang J."/>
            <person name="Sun D."/>
            <person name="Wang L."/>
            <person name="Ye M."/>
            <person name="Zou H."/>
        </authorList>
    </citation>
    <scope>PHOSPHORYLATION [LARGE SCALE ANALYSIS] AT SER-1122 AND THR-1131</scope>
    <scope>IDENTIFICATION BY MASS SPECTROMETRY [LARGE SCALE ANALYSIS]</scope>
    <source>
        <tissue>Liver</tissue>
    </source>
</reference>
<reference key="22">
    <citation type="journal article" date="2014" name="Mol. Cell. Proteomics">
        <title>Immunoaffinity enrichment and mass spectrometry analysis of protein methylation.</title>
        <authorList>
            <person name="Guo A."/>
            <person name="Gu H."/>
            <person name="Zhou J."/>
            <person name="Mulhern D."/>
            <person name="Wang Y."/>
            <person name="Lee K.A."/>
            <person name="Yang V."/>
            <person name="Aguiar M."/>
            <person name="Kornhauser J."/>
            <person name="Jia X."/>
            <person name="Ren J."/>
            <person name="Beausoleil S.A."/>
            <person name="Silva J.C."/>
            <person name="Vemulapalli V."/>
            <person name="Bedford M.T."/>
            <person name="Comb M.J."/>
        </authorList>
    </citation>
    <scope>METHYLATION [LARGE SCALE ANALYSIS] AT ARG-950 AND ARG-1615</scope>
    <scope>IDENTIFICATION BY MASS SPECTROMETRY [LARGE SCALE ANALYSIS]</scope>
    <source>
        <tissue>Colon carcinoma</tissue>
    </source>
</reference>
<reference key="23">
    <citation type="journal article" date="2011" name="Structure">
        <title>The Phe105 loop of Alix Bro1 domain plays a key role in HIV-1 release.</title>
        <authorList>
            <person name="Sette P."/>
            <person name="Mu R."/>
            <person name="Dussupt V."/>
            <person name="Jiang J."/>
            <person name="Snyder G."/>
            <person name="Smith P."/>
            <person name="Xiao T.S."/>
            <person name="Bouamr F."/>
        </authorList>
    </citation>
    <scope>X-RAY CRYSTALLOGRAPHY (1.95 ANGSTROMS) OF 2-361</scope>
</reference>
<reference evidence="20 21" key="24">
    <citation type="journal article" date="2016" name="Structure">
        <title>Structural basis for selective interaction between the ESCRT regulator HD-PTP and UBAP1.</title>
        <authorList>
            <person name="Gahloth D."/>
            <person name="Levy C."/>
            <person name="Heaven G."/>
            <person name="Stefani F."/>
            <person name="Wunderley L."/>
            <person name="Mould P."/>
            <person name="Cliff M.J."/>
            <person name="Bella J."/>
            <person name="Fielding A.J."/>
            <person name="Woodman P."/>
            <person name="Tabernero L."/>
        </authorList>
    </citation>
    <scope>X-RAY CRYSTALLOGRAPHY (2.54 ANGSTROMS) OF 362-713 IN COMPLEX WITH UBAP1</scope>
    <scope>MUTAGENESIS OF PHE-678</scope>
</reference>
<reference key="25">
    <citation type="journal article" date="2015" name="Cell Rep.">
        <title>Accelerating novel candidate gene discovery in neurogenetic disorders via whole-exome sequencing of prescreened multiplex consanguineous families.</title>
        <authorList>
            <person name="Alazami A.M."/>
            <person name="Patel N."/>
            <person name="Shamseldin H.E."/>
            <person name="Anazi S."/>
            <person name="Al-Dosari M.S."/>
            <person name="Alzahrani F."/>
            <person name="Hijazi H."/>
            <person name="Alshammari M."/>
            <person name="Aldahmesh M.A."/>
            <person name="Salih M.A."/>
            <person name="Faqeih E."/>
            <person name="Alhashem A."/>
            <person name="Bashiri F.A."/>
            <person name="Al-Owain M."/>
            <person name="Kentab A.Y."/>
            <person name="Sogaty S."/>
            <person name="Al Tala S."/>
            <person name="Temsah M.H."/>
            <person name="Tulbah M."/>
            <person name="Aljelaify R.F."/>
            <person name="Alshahwan S.A."/>
            <person name="Seidahmed M.Z."/>
            <person name="Alhadid A.A."/>
            <person name="Aldhalaan H."/>
            <person name="Alqallaf F."/>
            <person name="Kurdi W."/>
            <person name="Alfadhel M."/>
            <person name="Babay Z."/>
            <person name="Alsogheer M."/>
            <person name="Kaya N."/>
            <person name="Al-Hassnan Z.N."/>
            <person name="Abdel-Salam G.M."/>
            <person name="Al-Sannaa N."/>
            <person name="Al Mutairi F."/>
            <person name="El Khashab H.Y."/>
            <person name="Bohlega S."/>
            <person name="Jia X."/>
            <person name="Nguyen H.C."/>
            <person name="Hammami R."/>
            <person name="Adly N."/>
            <person name="Mohamed J.Y."/>
            <person name="Abdulwahab F."/>
            <person name="Ibrahim N."/>
            <person name="Naim E.A."/>
            <person name="Al-Younes B."/>
            <person name="Meyer B.F."/>
            <person name="Hashem M."/>
            <person name="Shaheen R."/>
            <person name="Xiong Y."/>
            <person name="Abouelhoda M."/>
            <person name="Aldeeri A.A."/>
            <person name="Monies D.M."/>
            <person name="Alkuraya F.S."/>
        </authorList>
    </citation>
    <scope>VARIANT NEDBASS LEU-1332</scope>
    <scope>INVOLVEMENT IN NEDBASS</scope>
</reference>
<reference key="26">
    <citation type="journal article" date="2017" name="Eur. J. Hum. Genet.">
        <title>Clinical exome sequencing: results from 2819 samples reflecting 1000 families.</title>
        <authorList>
            <person name="Trujillano D."/>
            <person name="Bertoli-Avella A.M."/>
            <person name="Kumar Kandaswamy K."/>
            <person name="Weiss M.E."/>
            <person name="Koester J."/>
            <person name="Marais A."/>
            <person name="Paknia O."/>
            <person name="Schroeder R."/>
            <person name="Garcia-Aznar J.M."/>
            <person name="Werber M."/>
            <person name="Brandau O."/>
            <person name="Calvo Del Castillo M."/>
            <person name="Baldi C."/>
            <person name="Wessel K."/>
            <person name="Kishore S."/>
            <person name="Nahavandi N."/>
            <person name="Eyaid W."/>
            <person name="Al Rifai M.T."/>
            <person name="Al-Rumayyan A."/>
            <person name="Al-Twaijri W."/>
            <person name="Alothaim A."/>
            <person name="Alhashem A."/>
            <person name="Al-Sannaa N."/>
            <person name="Al-Balwi M."/>
            <person name="Alfadhel M."/>
            <person name="Rolfs A."/>
            <person name="Abou Jamra R."/>
        </authorList>
    </citation>
    <scope>VARIANT NEDBASS VAL-302</scope>
    <scope>INVOLVEMENT IN NEDBASS</scope>
</reference>
<reference key="27">
    <citation type="journal article" date="2017" name="Hum. Genet.">
        <title>Mutations of PTPN23 in developmental and epileptic encephalopathy.</title>
        <authorList>
            <person name="Sowada N."/>
            <person name="Hashem M.O."/>
            <person name="Yilmaz R."/>
            <person name="Hamad M."/>
            <person name="Kakar N."/>
            <person name="Thiele H."/>
            <person name="Arold S.T."/>
            <person name="Bode H."/>
            <person name="Alkuraya F.S."/>
            <person name="Borck G."/>
        </authorList>
    </citation>
    <scope>VARIANTS NEDBASS LEU-532 AND 1196-ARG--THR-1636 DEL</scope>
    <scope>INVOLVEMENT IN NEDBASS</scope>
</reference>
<reference key="28">
    <citation type="journal article" date="2018" name="Eur. J. Hum. Genet.">
        <title>Developmental epileptic encephalopathy with hypomyelination and brain atrophy associated with PTPN23 variants affecting the assembly of UsnRNPs.</title>
        <authorList>
            <person name="Smigiel R."/>
            <person name="Landsberg G."/>
            <person name="Schilling M."/>
            <person name="Rydzanicz M."/>
            <person name="Pollak A."/>
            <person name="Walczak A."/>
            <person name="Stodolak A."/>
            <person name="Stawinski P."/>
            <person name="Mierzewska H."/>
            <person name="Sasiadek M.M."/>
            <person name="Gruss O.J."/>
            <person name="Ploski R."/>
        </authorList>
    </citation>
    <scope>VARIANT NEDBASS LYS-634</scope>
    <scope>INVOLVEMENT IN NEDBASS</scope>
</reference>
<reference key="29">
    <citation type="journal article" date="2020" name="Eur. J. Hum. Genet.">
        <title>Phenotype and mutation expansion of the PTPN23 associated disorder characterized by neurodevelopmental delay and structural brain abnormalities.</title>
        <authorList>
            <consortium name="Regeneron Genetics Center"/>
            <person name="Bend R."/>
            <person name="Cohen L."/>
            <person name="Carter M.T."/>
            <person name="Lyons M.J."/>
            <person name="Niyazov D."/>
            <person name="Mikati M.A."/>
            <person name="Rojas S.K."/>
            <person name="Person R.E."/>
            <person name="Si Y."/>
            <person name="Wentzensen I.M."/>
            <person name="Torti E."/>
            <person name="Lee J.A."/>
            <person name="Boycott K.M."/>
            <person name="Basel-Salmon L."/>
            <person name="Ferreira C.R."/>
            <person name="Gonzaga-Jauregui C."/>
        </authorList>
    </citation>
    <scope>VARIANTS NEDBASS GLN-232; TRP-431; ARG-583; LEU-829; 857-VAL--PRO-865 DEL; TYR-894; ARG-916; 960-GLN--PRO-963 DEL; HIS-1017; LYS-1250 AND LYS-1296 DEL</scope>
</reference>
<accession>Q9H3S7</accession>
<accession>A8K0D7</accession>
<accession>Q7KZF8</accession>
<accession>Q8N6Z5</accession>
<accession>Q9BSR5</accession>
<accession>Q9P257</accession>
<accession>Q9UG03</accession>
<accession>Q9UMZ4</accession>
<sequence>MEAVPRMPMIWLDLKEAGDFHFQPAVKKFVLKNYGENPEAYNEELKKLELLRQNAVRVPRDFEGCSVLRKYLGQLHYLQSRVPMGSGQEAAVPVTWTEIFSGKSVAHEDIKYEQACILYNLGALHSMLGAMDKRVSEEGMKVSCTHFQCAAGAFAYLREHFPQAYSVDMSRQILTLNVNLMLGQAQECLLEKSMLDNRKSFLVARISAQVVDYYKEACRALENPDTASLLGRIQKDWKKLVQMKIYYFAAVAHLHMGKQAEEQQKFGERVAYFQSALDKLNEAIKLAKGQPDTVQDALRFTMDVIGGKYNSAKKDNDFIYHEAVPALDTLQPVKGAPLVKPLPVNPTDPAVTGPDIFAKLVPMAAHEASSLYSEEKAKLLREMMAKIEDKNEVLDQFMDSMQLDPETVDNLDAYSHIPPQLMEKCAALSVRPDTVRNLVQSMQVLSGVFTDVEASLKDIRDLLEEDELLEQKFQEAVGQAGAISITSKAELAEVRREWAKYMEVHEKASFTNSELHRAMNLHVGNLRLLSGPLDQVRAALPTPALSPEDKAVLQNLKRILAKVQEMRDQRVSLEQQLRELIQKDDITASLVTTDHSEMKKLFEEQLKKYDQLKVYLEQNLAAQDRVLCALTEANVQYAAVRRVLSDLDQKWNSTLQTLVASYEAYEDLMKKSQEGRDFYADLESKVAALLERTQSTCQAREAARQQLLDRELKKKPPPRPTAPKPLLPRREESEAVEAGDPPEELRSLPPDMVAGPRLPDTFLGSATPLHFPPSPFPSSTGPGPHYLSGPLPPGTYSGPTQLIQPRAPGPHAMPVAPGPALYPAPAYTPELGLVPRSSPQHGVVSSPYVGVGPAPPVAGLPSAPPPQFSGPELAMAVRPATTTVDSIQAPIPSHTAPRPNPTPAPPPPCFPVPPPQPLPTPYTYPAGAKQPIPAQHHFSSGIPAGFPAPRIGPQPQPHPQPHPSQAFGPQPPQQPLPLQHPHLFPPQAPGLLPPQSPYPYAPQPGVLGQPPPPLHTQLYPGPAQDPLPAHSGALPFPSPGPPQPPHPPLAYGPAPSTRPMGPQAAPLTIRGPSSAGQSTPSPHLVPSPAPSPGPGPVPPRPPAAEPPPCLRRGAAAADLLSSSPESQHGGTQSPGGGQPLLQPTKVDAAEGRRPQALRLIERDPYEHPERLRQLQQELEAFRGQLGDVGALDTVWRELQDAQEHDARGRSIAIARCYSLKNRHQDVMPYDSNRVVLRSGKDDYINASCVEGLSPYCPPLVATQAPLPGTAADFWLMVHEQKVSVIVMLVSEAEMEKQKVARYFPTERGQPMVHGALSLALSSVRSTETHVERVLSLQFRDQSLKRSLVHLHFPTWPELGLPDSPSNLLRFIQEVHAHYLHQRPLHTPIIVHCSSGVGRTGAFALLYAAVQEVEAGNGIPELPQLVRRMRQQRKHMLQEKLHLRFCYEAVVRHVEQVLQRHGVPPPCKPLASASISQKNHLPQDSQDLVLGGDVPISSIQATIAKLSIRPPGGLESPVASLPGPAEPPGLPPASLPESTPIPSSSPPPLSSPLPEAPQPKEEPPVPEAPSSGPPSSSLELLASLTPEAFSLDSSLRGKQRMSKHNFLQAHNGQGLRATRPSDDPLSLLDPLWTLNKT</sequence>
<feature type="chain" id="PRO_0000094777" description="Tyrosine-protein phosphatase non-receptor type 23">
    <location>
        <begin position="1"/>
        <end position="1636"/>
    </location>
</feature>
<feature type="domain" description="BRO1" evidence="3">
    <location>
        <begin position="8"/>
        <end position="394"/>
    </location>
</feature>
<feature type="repeat" description="TPR 1">
    <location>
        <begin position="250"/>
        <end position="283"/>
    </location>
</feature>
<feature type="repeat" description="TPR 2">
    <location>
        <begin position="374"/>
        <end position="407"/>
    </location>
</feature>
<feature type="repeat" description="1">
    <location>
        <begin position="953"/>
        <end position="954"/>
    </location>
</feature>
<feature type="repeat" description="2">
    <location>
        <begin position="955"/>
        <end position="956"/>
    </location>
</feature>
<feature type="repeat" description="3">
    <location>
        <begin position="957"/>
        <end position="958"/>
    </location>
</feature>
<feature type="repeat" description="4">
    <location>
        <begin position="959"/>
        <end position="960"/>
    </location>
</feature>
<feature type="repeat" description="5">
    <location>
        <begin position="961"/>
        <end position="962"/>
    </location>
</feature>
<feature type="repeat" description="6">
    <location>
        <begin position="963"/>
        <end position="964"/>
    </location>
</feature>
<feature type="domain" description="Tyrosine-protein phosphatase" evidence="2">
    <location>
        <begin position="1192"/>
        <end position="1452"/>
    </location>
</feature>
<feature type="region of interest" description="Disordered" evidence="5">
    <location>
        <begin position="701"/>
        <end position="812"/>
    </location>
</feature>
<feature type="region of interest" description="His">
    <location>
        <begin position="770"/>
        <end position="1130"/>
    </location>
</feature>
<feature type="region of interest" description="Disordered" evidence="5">
    <location>
        <begin position="888"/>
        <end position="1151"/>
    </location>
</feature>
<feature type="region of interest" description="6 X 2 AA approximate tandem repeats of P-Q">
    <location>
        <begin position="953"/>
        <end position="964"/>
    </location>
</feature>
<feature type="region of interest" description="Disordered" evidence="5">
    <location>
        <begin position="1513"/>
        <end position="1636"/>
    </location>
</feature>
<feature type="coiled-coil region" evidence="1">
    <location>
        <begin position="550"/>
        <end position="623"/>
    </location>
</feature>
<feature type="compositionally biased region" description="Basic and acidic residues" evidence="5">
    <location>
        <begin position="701"/>
        <end position="714"/>
    </location>
</feature>
<feature type="compositionally biased region" description="Pro residues" evidence="5">
    <location>
        <begin position="898"/>
        <end position="922"/>
    </location>
</feature>
<feature type="compositionally biased region" description="Pro residues" evidence="5">
    <location>
        <begin position="950"/>
        <end position="962"/>
    </location>
</feature>
<feature type="compositionally biased region" description="Pro residues" evidence="5">
    <location>
        <begin position="983"/>
        <end position="1002"/>
    </location>
</feature>
<feature type="compositionally biased region" description="Pro residues" evidence="5">
    <location>
        <begin position="1036"/>
        <end position="1050"/>
    </location>
</feature>
<feature type="compositionally biased region" description="Pro residues" evidence="5">
    <location>
        <begin position="1083"/>
        <end position="1109"/>
    </location>
</feature>
<feature type="compositionally biased region" description="Polar residues" evidence="5">
    <location>
        <begin position="1120"/>
        <end position="1131"/>
    </location>
</feature>
<feature type="compositionally biased region" description="Pro residues" evidence="5">
    <location>
        <begin position="1523"/>
        <end position="1533"/>
    </location>
</feature>
<feature type="compositionally biased region" description="Pro residues" evidence="5">
    <location>
        <begin position="1542"/>
        <end position="1556"/>
    </location>
</feature>
<feature type="compositionally biased region" description="Low complexity" evidence="5">
    <location>
        <begin position="1567"/>
        <end position="1587"/>
    </location>
</feature>
<feature type="active site" description="Phosphocysteine intermediate" evidence="2 4">
    <location>
        <position position="1392"/>
    </location>
</feature>
<feature type="modified residue" description="Phosphoserine" evidence="24">
    <location>
        <position position="733"/>
    </location>
</feature>
<feature type="modified residue" description="Omega-N-methylarginine" evidence="25">
    <location>
        <position position="950"/>
    </location>
</feature>
<feature type="modified residue" description="Phosphoserine" evidence="26">
    <location>
        <position position="1122"/>
    </location>
</feature>
<feature type="modified residue" description="Phosphoserine" evidence="22 23">
    <location>
        <position position="1123"/>
    </location>
</feature>
<feature type="modified residue" description="Phosphothreonine" evidence="26">
    <location>
        <position position="1131"/>
    </location>
</feature>
<feature type="modified residue" description="Omega-N-methylarginine" evidence="25">
    <location>
        <position position="1615"/>
    </location>
</feature>
<feature type="sequence variant" id="VAR_084289" description="In NEDBASS; uncertain significance; dbSNP:rs577689618." evidence="18">
    <original>R</original>
    <variation>Q</variation>
    <location>
        <position position="232"/>
    </location>
</feature>
<feature type="sequence variant" id="VAR_084290" description="In NEDBASS; uncertain significance; dbSNP:rs748601492." evidence="15">
    <original>M</original>
    <variation>V</variation>
    <location>
        <position position="302"/>
    </location>
</feature>
<feature type="sequence variant" id="VAR_084291" description="In NEDBASS; uncertain significance; dbSNP:rs150712932." evidence="18">
    <original>R</original>
    <variation>W</variation>
    <location>
        <position position="431"/>
    </location>
</feature>
<feature type="sequence variant" id="VAR_084292" description="In NEDBASS; dbSNP:rs1401681748." evidence="16">
    <original>P</original>
    <variation>L</variation>
    <location>
        <position position="532"/>
    </location>
</feature>
<feature type="sequence variant" id="VAR_084293" description="In NEDBASS; when associated in cis with H-1017; uncertain significance; dbSNP:rs147293860." evidence="18">
    <original>K</original>
    <variation>R</variation>
    <location>
        <position position="583"/>
    </location>
</feature>
<feature type="sequence variant" id="VAR_084294" description="In NEDBASS; dbSNP:rs748130198." evidence="17">
    <original>N</original>
    <variation>K</variation>
    <location>
        <position position="634"/>
    </location>
</feature>
<feature type="sequence variant" id="VAR_084295" description="In NEDBASS; uncertain significance; dbSNP:rs138076291." evidence="18">
    <original>P</original>
    <variation>L</variation>
    <location>
        <position position="829"/>
    </location>
</feature>
<feature type="sequence variant" id="VAR_084296" description="In NEDBASS; uncertain significance." evidence="18">
    <location>
        <begin position="857"/>
        <end position="865"/>
    </location>
</feature>
<feature type="sequence variant" id="VAR_084297" description="In NEDBASS; uncertain significance; dbSNP:rs967738491." evidence="18">
    <original>H</original>
    <variation>Y</variation>
    <location>
        <position position="894"/>
    </location>
</feature>
<feature type="sequence variant" id="VAR_084298" description="In NEDBASS; uncertain significance; dbSNP:rs770692989." evidence="18">
    <original>Q</original>
    <variation>R</variation>
    <location>
        <position position="916"/>
    </location>
</feature>
<feature type="sequence variant" id="VAR_022682" description="In dbSNP:rs6780013." evidence="6 8">
    <original>A</original>
    <variation>T</variation>
    <location>
        <position position="944"/>
    </location>
</feature>
<feature type="sequence variant" id="VAR_084299" description="In NEDBASS; uncertain significance." evidence="18">
    <location>
        <begin position="960"/>
        <end position="963"/>
    </location>
</feature>
<feature type="sequence variant" id="VAR_084300" description="In NEDBASS; when associated in cis with R-583; uncertain significance; dbSNP:rs201017613." evidence="18">
    <original>Q</original>
    <variation>H</variation>
    <location>
        <position position="1017"/>
    </location>
</feature>
<feature type="sequence variant" id="VAR_022683" description="In dbSNP:rs149563514." evidence="7">
    <original>P</original>
    <variation>S</variation>
    <location>
        <position position="1099"/>
    </location>
</feature>
<feature type="sequence variant" id="VAR_084301" description="In NEDBASS." evidence="16">
    <location>
        <begin position="1196"/>
        <end position="1636"/>
    </location>
</feature>
<feature type="sequence variant" id="VAR_084302" description="In NEDBASS; uncertain significance; dbSNP:rs148689441." evidence="18">
    <original>E</original>
    <variation>K</variation>
    <location>
        <position position="1250"/>
    </location>
</feature>
<feature type="sequence variant" id="VAR_084303" description="In NEDBASS; uncertain significance; dbSNP:rs751809435." evidence="18">
    <location>
        <position position="1296"/>
    </location>
</feature>
<feature type="sequence variant" id="VAR_084304" description="In NEDBASS; uncertain significance; dbSNP:rs730882229." evidence="13">
    <original>R</original>
    <variation>L</variation>
    <location>
        <position position="1332"/>
    </location>
</feature>
<feature type="mutagenesis site" description="Nearly abolishes interaction with CHMP4B. Abolishes interaction with CHMP4B; when associated with D-206." evidence="9">
    <original>L</original>
    <variation>D</variation>
    <location>
        <position position="202"/>
    </location>
</feature>
<feature type="mutagenesis site" description="Abolishes interaction with CHMP4B; when associated with D-202." evidence="9">
    <original>I</original>
    <variation>D</variation>
    <location>
        <position position="206"/>
    </location>
</feature>
<feature type="mutagenesis site" description="Abolishes interaction with UBAP1." evidence="12 14">
    <original>F</original>
    <variation>S</variation>
    <variation>D</variation>
    <location>
        <position position="678"/>
    </location>
</feature>
<feature type="sequence conflict" description="In Ref. 8; CAB53676." evidence="19" ref="8">
    <original>L</original>
    <variation>G</variation>
    <location>
        <position position="647"/>
    </location>
</feature>
<feature type="sequence conflict" description="In Ref. 8; CAB53676." evidence="19" ref="8">
    <original>S</original>
    <variation>P</variation>
    <location>
        <position position="1087"/>
    </location>
</feature>
<feature type="strand" evidence="29">
    <location>
        <begin position="17"/>
        <end position="20"/>
    </location>
</feature>
<feature type="helix" evidence="29">
    <location>
        <begin position="22"/>
        <end position="33"/>
    </location>
</feature>
<feature type="turn" evidence="29">
    <location>
        <begin position="38"/>
        <end position="41"/>
    </location>
</feature>
<feature type="helix" evidence="29">
    <location>
        <begin position="42"/>
        <end position="56"/>
    </location>
</feature>
<feature type="helix" evidence="29">
    <location>
        <begin position="62"/>
        <end position="81"/>
    </location>
</feature>
<feature type="strand" evidence="29">
    <location>
        <begin position="94"/>
        <end position="97"/>
    </location>
</feature>
<feature type="turn" evidence="29">
    <location>
        <begin position="99"/>
        <end position="101"/>
    </location>
</feature>
<feature type="strand" evidence="29">
    <location>
        <begin position="104"/>
        <end position="108"/>
    </location>
</feature>
<feature type="helix" evidence="29">
    <location>
        <begin position="110"/>
        <end position="131"/>
    </location>
</feature>
<feature type="helix" evidence="29">
    <location>
        <begin position="137"/>
        <end position="160"/>
    </location>
</feature>
<feature type="helix" evidence="29">
    <location>
        <begin position="167"/>
        <end position="169"/>
    </location>
</feature>
<feature type="helix" evidence="29">
    <location>
        <begin position="171"/>
        <end position="195"/>
    </location>
</feature>
<feature type="helix" evidence="29">
    <location>
        <begin position="200"/>
        <end position="221"/>
    </location>
</feature>
<feature type="helix" evidence="29">
    <location>
        <begin position="224"/>
        <end position="230"/>
    </location>
</feature>
<feature type="helix" evidence="29">
    <location>
        <begin position="232"/>
        <end position="262"/>
    </location>
</feature>
<feature type="helix" evidence="29">
    <location>
        <begin position="266"/>
        <end position="286"/>
    </location>
</feature>
<feature type="turn" evidence="29">
    <location>
        <begin position="287"/>
        <end position="289"/>
    </location>
</feature>
<feature type="helix" evidence="29">
    <location>
        <begin position="292"/>
        <end position="318"/>
    </location>
</feature>
<feature type="helix" evidence="29">
    <location>
        <begin position="327"/>
        <end position="329"/>
    </location>
</feature>
<feature type="helix" evidence="29">
    <location>
        <begin position="349"/>
        <end position="352"/>
    </location>
</feature>
<feature type="turn" evidence="29">
    <location>
        <begin position="356"/>
        <end position="359"/>
    </location>
</feature>
<feature type="helix" evidence="28">
    <location>
        <begin position="365"/>
        <end position="370"/>
    </location>
</feature>
<feature type="helix" evidence="28">
    <location>
        <begin position="373"/>
        <end position="400"/>
    </location>
</feature>
<feature type="helix" evidence="28">
    <location>
        <begin position="412"/>
        <end position="415"/>
    </location>
</feature>
<feature type="helix" evidence="28">
    <location>
        <begin position="419"/>
        <end position="429"/>
    </location>
</feature>
<feature type="helix" evidence="28">
    <location>
        <begin position="434"/>
        <end position="475"/>
    </location>
</feature>
<feature type="helix" evidence="28">
    <location>
        <begin position="490"/>
        <end position="529"/>
    </location>
</feature>
<feature type="helix" evidence="28">
    <location>
        <begin position="533"/>
        <end position="539"/>
    </location>
</feature>
<feature type="helix" evidence="28">
    <location>
        <begin position="547"/>
        <end position="583"/>
    </location>
</feature>
<feature type="turn" evidence="27">
    <location>
        <begin position="588"/>
        <end position="591"/>
    </location>
</feature>
<feature type="helix" evidence="28">
    <location>
        <begin position="601"/>
        <end position="605"/>
    </location>
</feature>
<feature type="helix" evidence="28">
    <location>
        <begin position="606"/>
        <end position="609"/>
    </location>
</feature>
<feature type="helix" evidence="28">
    <location>
        <begin position="610"/>
        <end position="621"/>
    </location>
</feature>
<feature type="helix" evidence="28">
    <location>
        <begin position="623"/>
        <end position="635"/>
    </location>
</feature>
<feature type="helix" evidence="28">
    <location>
        <begin position="638"/>
        <end position="703"/>
    </location>
</feature>
<feature type="turn" evidence="28">
    <location>
        <begin position="704"/>
        <end position="707"/>
    </location>
</feature>
<gene>
    <name type="primary">PTPN23</name>
    <name type="synonym">KIAA1471</name>
</gene>
<evidence type="ECO:0000255" key="1"/>
<evidence type="ECO:0000255" key="2">
    <source>
        <dbReference type="PROSITE-ProRule" id="PRU00160"/>
    </source>
</evidence>
<evidence type="ECO:0000255" key="3">
    <source>
        <dbReference type="PROSITE-ProRule" id="PRU00526"/>
    </source>
</evidence>
<evidence type="ECO:0000255" key="4">
    <source>
        <dbReference type="PROSITE-ProRule" id="PRU10044"/>
    </source>
</evidence>
<evidence type="ECO:0000256" key="5">
    <source>
        <dbReference type="SAM" id="MobiDB-lite"/>
    </source>
</evidence>
<evidence type="ECO:0000269" key="6">
    <source>
    </source>
</evidence>
<evidence type="ECO:0000269" key="7">
    <source>
    </source>
</evidence>
<evidence type="ECO:0000269" key="8">
    <source>
    </source>
</evidence>
<evidence type="ECO:0000269" key="9">
    <source>
    </source>
</evidence>
<evidence type="ECO:0000269" key="10">
    <source>
    </source>
</evidence>
<evidence type="ECO:0000269" key="11">
    <source>
    </source>
</evidence>
<evidence type="ECO:0000269" key="12">
    <source>
    </source>
</evidence>
<evidence type="ECO:0000269" key="13">
    <source>
    </source>
</evidence>
<evidence type="ECO:0000269" key="14">
    <source>
    </source>
</evidence>
<evidence type="ECO:0000269" key="15">
    <source>
    </source>
</evidence>
<evidence type="ECO:0000269" key="16">
    <source>
    </source>
</evidence>
<evidence type="ECO:0000269" key="17">
    <source>
    </source>
</evidence>
<evidence type="ECO:0000269" key="18">
    <source>
    </source>
</evidence>
<evidence type="ECO:0000305" key="19"/>
<evidence type="ECO:0007744" key="20">
    <source>
        <dbReference type="PDB" id="5LM1"/>
    </source>
</evidence>
<evidence type="ECO:0007744" key="21">
    <source>
        <dbReference type="PDB" id="5LM2"/>
    </source>
</evidence>
<evidence type="ECO:0007744" key="22">
    <source>
    </source>
</evidence>
<evidence type="ECO:0007744" key="23">
    <source>
    </source>
</evidence>
<evidence type="ECO:0007744" key="24">
    <source>
    </source>
</evidence>
<evidence type="ECO:0007744" key="25">
    <source>
    </source>
</evidence>
<evidence type="ECO:0007744" key="26">
    <source>
    </source>
</evidence>
<evidence type="ECO:0007829" key="27">
    <source>
        <dbReference type="PDB" id="5LM1"/>
    </source>
</evidence>
<evidence type="ECO:0007829" key="28">
    <source>
        <dbReference type="PDB" id="5LM2"/>
    </source>
</evidence>
<evidence type="ECO:0007829" key="29">
    <source>
        <dbReference type="PDB" id="5MK2"/>
    </source>
</evidence>
<keyword id="KW-0002">3D-structure</keyword>
<keyword id="KW-0966">Cell projection</keyword>
<keyword id="KW-0969">Cilium</keyword>
<keyword id="KW-0970">Cilium biogenesis/degradation</keyword>
<keyword id="KW-0175">Coiled coil</keyword>
<keyword id="KW-0963">Cytoplasm</keyword>
<keyword id="KW-0968">Cytoplasmic vesicle</keyword>
<keyword id="KW-0206">Cytoskeleton</keyword>
<keyword id="KW-0225">Disease variant</keyword>
<keyword id="KW-0967">Endosome</keyword>
<keyword id="KW-0887">Epilepsy</keyword>
<keyword id="KW-0378">Hydrolase</keyword>
<keyword id="KW-0991">Intellectual disability</keyword>
<keyword id="KW-0488">Methylation</keyword>
<keyword id="KW-0539">Nucleus</keyword>
<keyword id="KW-0597">Phosphoprotein</keyword>
<keyword id="KW-0904">Protein phosphatase</keyword>
<keyword id="KW-0653">Protein transport</keyword>
<keyword id="KW-1267">Proteomics identification</keyword>
<keyword id="KW-1185">Reference proteome</keyword>
<keyword id="KW-0677">Repeat</keyword>
<keyword id="KW-0802">TPR repeat</keyword>
<keyword id="KW-0813">Transport</keyword>
<name>PTN23_HUMAN</name>
<comment type="function">
    <text evidence="9 10 12">Plays a role in sorting of endocytic ubiquitinated cargos into multivesicular bodies (MVBs) via its interaction with the ESCRT-I complex (endosomal sorting complex required for transport I), and possibly also other ESCRT complexes (PubMed:18434552, PubMed:21757351). May act as a negative regulator of Ras-mediated mitogenic activity (PubMed:18434552). Plays a role in ciliogenesis (PubMed:20393563).</text>
</comment>
<comment type="catalytic activity">
    <reaction evidence="4">
        <text>O-phospho-L-tyrosyl-[protein] + H2O = L-tyrosyl-[protein] + phosphate</text>
        <dbReference type="Rhea" id="RHEA:10684"/>
        <dbReference type="Rhea" id="RHEA-COMP:10136"/>
        <dbReference type="Rhea" id="RHEA-COMP:20101"/>
        <dbReference type="ChEBI" id="CHEBI:15377"/>
        <dbReference type="ChEBI" id="CHEBI:43474"/>
        <dbReference type="ChEBI" id="CHEBI:46858"/>
        <dbReference type="ChEBI" id="CHEBI:61978"/>
        <dbReference type="EC" id="3.1.3.48"/>
    </reaction>
</comment>
<comment type="subunit">
    <text evidence="9 11 12 14">Interacts with GRAP2 and GRB2 (PubMed:21179510). Interacts with UBAP1 (PubMed:21757351, PubMed:27839950). Interacts with CHMP4B (PubMed:18434552).</text>
</comment>
<comment type="interaction">
    <interactant intactId="EBI-724478">
        <id>Q9H3S7</id>
    </interactant>
    <interactant intactId="EBI-36944577">
        <id>Q96G01-4</id>
        <label>BICD1</label>
    </interactant>
    <organismsDiffer>false</organismsDiffer>
    <experiments>4</experiments>
</comment>
<comment type="interaction">
    <interactant intactId="EBI-724478">
        <id>Q9H3S7</id>
    </interactant>
    <interactant intactId="EBI-741885">
        <id>Q96LK0</id>
        <label>CEP19</label>
    </interactant>
    <organismsDiffer>false</organismsDiffer>
    <experiments>3</experiments>
</comment>
<comment type="interaction">
    <interactant intactId="EBI-724478">
        <id>Q9H3S7</id>
    </interactant>
    <interactant intactId="EBI-747776">
        <id>Q53EZ4</id>
        <label>CEP55</label>
    </interactant>
    <organismsDiffer>false</organismsDiffer>
    <experiments>3</experiments>
</comment>
<comment type="interaction">
    <interactant intactId="EBI-724478">
        <id>Q9H3S7</id>
    </interactant>
    <interactant intactId="EBI-749627">
        <id>Q9H444</id>
        <label>CHMP4B</label>
    </interactant>
    <organismsDiffer>false</organismsDiffer>
    <experiments>4</experiments>
</comment>
<comment type="interaction">
    <interactant intactId="EBI-724478">
        <id>Q9H3S7</id>
    </interactant>
    <interactant intactId="EBI-740418">
        <id>O75791</id>
        <label>GRAP2</label>
    </interactant>
    <organismsDiffer>false</organismsDiffer>
    <experiments>8</experiments>
</comment>
<comment type="interaction">
    <interactant intactId="EBI-724478">
        <id>Q9H3S7</id>
    </interactant>
    <interactant intactId="EBI-401755">
        <id>P62993</id>
        <label>GRB2</label>
    </interactant>
    <organismsDiffer>false</organismsDiffer>
    <experiments>8</experiments>
</comment>
<comment type="interaction">
    <interactant intactId="EBI-724478">
        <id>Q9H3S7</id>
    </interactant>
    <interactant intactId="EBI-945833">
        <id>Q7Z3S9</id>
        <label>NOTCH2NLA</label>
    </interactant>
    <organismsDiffer>false</organismsDiffer>
    <experiments>4</experiments>
</comment>
<comment type="interaction">
    <interactant intactId="EBI-724478">
        <id>Q9H3S7</id>
    </interactant>
    <interactant intactId="EBI-352915">
        <id>O75340</id>
        <label>PDCD6</label>
    </interactant>
    <organismsDiffer>false</organismsDiffer>
    <experiments>3</experiments>
</comment>
<comment type="interaction">
    <interactant intactId="EBI-724478">
        <id>Q9H3S7</id>
    </interactant>
    <interactant intactId="EBI-348380">
        <id>P25788</id>
        <label>PSMA3</label>
    </interactant>
    <organismsDiffer>false</organismsDiffer>
    <experiments>3</experiments>
</comment>
<comment type="interaction">
    <interactant intactId="EBI-724478">
        <id>Q9H3S7</id>
    </interactant>
    <interactant intactId="EBI-702142">
        <id>Q05397</id>
        <label>PTK2</label>
    </interactant>
    <organismsDiffer>false</organismsDiffer>
    <experiments>4</experiments>
</comment>
<comment type="interaction">
    <interactant intactId="EBI-724478">
        <id>Q9H3S7</id>
    </interactant>
    <interactant intactId="EBI-77938">
        <id>Q99962</id>
        <label>SH3GL2</label>
    </interactant>
    <organismsDiffer>false</organismsDiffer>
    <experiments>2</experiments>
</comment>
<comment type="interaction">
    <interactant intactId="EBI-724478">
        <id>Q9H3S7</id>
    </interactant>
    <interactant intactId="EBI-719493">
        <id>P14373</id>
        <label>TRIM27</label>
    </interactant>
    <organismsDiffer>false</organismsDiffer>
    <experiments>3</experiments>
</comment>
<comment type="interaction">
    <interactant intactId="EBI-724478">
        <id>Q9H3S7</id>
    </interactant>
    <interactant intactId="EBI-346882">
        <id>Q99816</id>
        <label>TSG101</label>
    </interactant>
    <organismsDiffer>false</organismsDiffer>
    <experiments>2</experiments>
</comment>
<comment type="interaction">
    <interactant intactId="EBI-724478">
        <id>Q9H3S7</id>
    </interactant>
    <interactant intactId="EBI-642151">
        <id>O89100</id>
        <label>Grap2</label>
    </interactant>
    <organismsDiffer>true</organismsDiffer>
    <experiments>3</experiments>
</comment>
<comment type="subcellular location">
    <subcellularLocation>
        <location>Nucleus</location>
    </subcellularLocation>
    <subcellularLocation>
        <location>Cytoplasm</location>
    </subcellularLocation>
    <subcellularLocation>
        <location>Cytoplasmic vesicle</location>
    </subcellularLocation>
    <subcellularLocation>
        <location>Endosome</location>
    </subcellularLocation>
    <subcellularLocation>
        <location>Cytoplasm</location>
        <location>Cytoskeleton</location>
        <location>Cilium basal body</location>
    </subcellularLocation>
    <subcellularLocation>
        <location>Early endosome</location>
    </subcellularLocation>
</comment>
<comment type="disease" evidence="13 15 16 17 18">
    <disease id="DI-05846">
        <name>Neurodevelopmental disorder and structural brain anomalies with or without seizures and spasticity</name>
        <acronym>NEDBASS</acronym>
        <description>An autosomal recessive disorder characterized by global developmental delay, brain abnormalities, mainly ventriculomegaly and/or brain atrophy, intellectual disability, absent speech, peripheral spasticity, and microcephaly. Additional variable features include early-onset seizures, optic atrophy, and dysmorphic facial features. Early death may occur.</description>
        <dbReference type="MIM" id="618890"/>
    </disease>
    <text>The disease is caused by variants affecting the gene represented in this entry.</text>
</comment>
<comment type="similarity">
    <text evidence="19">Belongs to the protein-tyrosine phosphatase family. Non-receptor class subfamily.</text>
</comment>
<comment type="sequence caution" evidence="19">
    <conflict type="erroneous initiation">
        <sequence resource="EMBL-CDS" id="BAA95995"/>
    </conflict>
    <text>Extended N-terminus.</text>
</comment>
<proteinExistence type="evidence at protein level"/>
<dbReference type="EC" id="3.1.3.48"/>
<dbReference type="EMBL" id="AB025194">
    <property type="protein sequence ID" value="BAB19280.1"/>
    <property type="molecule type" value="mRNA"/>
</dbReference>
<dbReference type="EMBL" id="AF290614">
    <property type="protein sequence ID" value="AAK28025.1"/>
    <property type="molecule type" value="mRNA"/>
</dbReference>
<dbReference type="EMBL" id="AK289502">
    <property type="protein sequence ID" value="BAF82191.1"/>
    <property type="molecule type" value="mRNA"/>
</dbReference>
<dbReference type="EMBL" id="CH471055">
    <property type="protein sequence ID" value="EAW64823.1"/>
    <property type="molecule type" value="Genomic_DNA"/>
</dbReference>
<dbReference type="EMBL" id="BC004881">
    <property type="protein sequence ID" value="AAH04881.2"/>
    <property type="molecule type" value="mRNA"/>
</dbReference>
<dbReference type="EMBL" id="BC027711">
    <property type="protein sequence ID" value="AAH27711.2"/>
    <property type="molecule type" value="mRNA"/>
</dbReference>
<dbReference type="EMBL" id="BC089042">
    <property type="protein sequence ID" value="AAH89042.1"/>
    <property type="molecule type" value="mRNA"/>
</dbReference>
<dbReference type="EMBL" id="AB040904">
    <property type="protein sequence ID" value="BAA95995.2"/>
    <property type="status" value="ALT_INIT"/>
    <property type="molecule type" value="mRNA"/>
</dbReference>
<dbReference type="EMBL" id="AL110210">
    <property type="protein sequence ID" value="CAB53676.1"/>
    <property type="molecule type" value="mRNA"/>
</dbReference>
<dbReference type="EMBL" id="BT009758">
    <property type="protein sequence ID" value="AAP88760.1"/>
    <property type="molecule type" value="mRNA"/>
</dbReference>
<dbReference type="EMBL" id="AF169350">
    <property type="protein sequence ID" value="AAD50276.1"/>
    <property type="molecule type" value="mRNA"/>
</dbReference>
<dbReference type="CCDS" id="CCDS2754.1"/>
<dbReference type="PIR" id="T14756">
    <property type="entry name" value="T14756"/>
</dbReference>
<dbReference type="RefSeq" id="NP_001291411.1">
    <property type="nucleotide sequence ID" value="NM_001304482.1"/>
</dbReference>
<dbReference type="RefSeq" id="NP_056281.1">
    <property type="nucleotide sequence ID" value="NM_015466.4"/>
</dbReference>
<dbReference type="PDB" id="3RAU">
    <property type="method" value="X-ray"/>
    <property type="resolution" value="1.95 A"/>
    <property type="chains" value="A/B=2-361"/>
</dbReference>
<dbReference type="PDB" id="5CRU">
    <property type="method" value="X-ray"/>
    <property type="resolution" value="2.40 A"/>
    <property type="chains" value="A/B/C/D=1-361"/>
</dbReference>
<dbReference type="PDB" id="5CRV">
    <property type="method" value="X-ray"/>
    <property type="resolution" value="2.00 A"/>
    <property type="chains" value="A/B=1-361"/>
</dbReference>
<dbReference type="PDB" id="5LM1">
    <property type="method" value="X-ray"/>
    <property type="resolution" value="2.55 A"/>
    <property type="chains" value="A=362-713"/>
</dbReference>
<dbReference type="PDB" id="5LM2">
    <property type="method" value="X-ray"/>
    <property type="resolution" value="2.54 A"/>
    <property type="chains" value="A/B=362-713"/>
</dbReference>
<dbReference type="PDB" id="5MJY">
    <property type="method" value="X-ray"/>
    <property type="resolution" value="2.25 A"/>
    <property type="chains" value="A/B/C/D=1-361"/>
</dbReference>
<dbReference type="PDB" id="5MJZ">
    <property type="method" value="X-ray"/>
    <property type="resolution" value="1.87 A"/>
    <property type="chains" value="A/B=1-361"/>
</dbReference>
<dbReference type="PDB" id="5MK0">
    <property type="method" value="X-ray"/>
    <property type="resolution" value="1.76 A"/>
    <property type="chains" value="A/C=1-361"/>
</dbReference>
<dbReference type="PDB" id="5MK1">
    <property type="method" value="X-ray"/>
    <property type="resolution" value="2.50 A"/>
    <property type="chains" value="A/B/C/D=1-361"/>
</dbReference>
<dbReference type="PDB" id="5MK2">
    <property type="method" value="X-ray"/>
    <property type="resolution" value="1.70 A"/>
    <property type="chains" value="A/B=1-361"/>
</dbReference>
<dbReference type="PDB" id="5MK3">
    <property type="method" value="X-ray"/>
    <property type="resolution" value="2.00 A"/>
    <property type="chains" value="A/B/C/D=1-361"/>
</dbReference>
<dbReference type="PDBsum" id="3RAU"/>
<dbReference type="PDBsum" id="5CRU"/>
<dbReference type="PDBsum" id="5CRV"/>
<dbReference type="PDBsum" id="5LM1"/>
<dbReference type="PDBsum" id="5LM2"/>
<dbReference type="PDBsum" id="5MJY"/>
<dbReference type="PDBsum" id="5MJZ"/>
<dbReference type="PDBsum" id="5MK0"/>
<dbReference type="PDBsum" id="5MK1"/>
<dbReference type="PDBsum" id="5MK2"/>
<dbReference type="PDBsum" id="5MK3"/>
<dbReference type="SMR" id="Q9H3S7"/>
<dbReference type="BioGRID" id="117430">
    <property type="interactions" value="168"/>
</dbReference>
<dbReference type="DIP" id="DIP-29923N"/>
<dbReference type="FunCoup" id="Q9H3S7">
    <property type="interactions" value="3386"/>
</dbReference>
<dbReference type="IntAct" id="Q9H3S7">
    <property type="interactions" value="66"/>
</dbReference>
<dbReference type="MINT" id="Q9H3S7"/>
<dbReference type="STRING" id="9606.ENSP00000265562"/>
<dbReference type="DEPOD" id="PTPN23"/>
<dbReference type="GlyCosmos" id="Q9H3S7">
    <property type="glycosylation" value="3 sites, 1 glycan"/>
</dbReference>
<dbReference type="GlyGen" id="Q9H3S7">
    <property type="glycosylation" value="9 sites, 1 O-linked glycan (5 sites)"/>
</dbReference>
<dbReference type="iPTMnet" id="Q9H3S7"/>
<dbReference type="PhosphoSitePlus" id="Q9H3S7"/>
<dbReference type="SwissPalm" id="Q9H3S7"/>
<dbReference type="BioMuta" id="PTPN23"/>
<dbReference type="DMDM" id="68053318"/>
<dbReference type="jPOST" id="Q9H3S7"/>
<dbReference type="MassIVE" id="Q9H3S7"/>
<dbReference type="PaxDb" id="9606-ENSP00000265562"/>
<dbReference type="PeptideAtlas" id="Q9H3S7"/>
<dbReference type="ProteomicsDB" id="80750"/>
<dbReference type="Pumba" id="Q9H3S7"/>
<dbReference type="Antibodypedia" id="12918">
    <property type="antibodies" value="145 antibodies from 25 providers"/>
</dbReference>
<dbReference type="DNASU" id="25930"/>
<dbReference type="Ensembl" id="ENST00000265562.5">
    <property type="protein sequence ID" value="ENSP00000265562.4"/>
    <property type="gene ID" value="ENSG00000076201.16"/>
</dbReference>
<dbReference type="GeneID" id="25930"/>
<dbReference type="KEGG" id="hsa:25930"/>
<dbReference type="MANE-Select" id="ENST00000265562.5">
    <property type="protein sequence ID" value="ENSP00000265562.4"/>
    <property type="RefSeq nucleotide sequence ID" value="NM_015466.4"/>
    <property type="RefSeq protein sequence ID" value="NP_056281.1"/>
</dbReference>
<dbReference type="UCSC" id="uc003crf.2">
    <property type="organism name" value="human"/>
</dbReference>
<dbReference type="AGR" id="HGNC:14406"/>
<dbReference type="CTD" id="25930"/>
<dbReference type="DisGeNET" id="25930"/>
<dbReference type="GeneCards" id="PTPN23"/>
<dbReference type="HGNC" id="HGNC:14406">
    <property type="gene designation" value="PTPN23"/>
</dbReference>
<dbReference type="HPA" id="ENSG00000076201">
    <property type="expression patterns" value="Low tissue specificity"/>
</dbReference>
<dbReference type="MalaCards" id="PTPN23"/>
<dbReference type="MIM" id="606584">
    <property type="type" value="gene"/>
</dbReference>
<dbReference type="MIM" id="618890">
    <property type="type" value="phenotype"/>
</dbReference>
<dbReference type="neXtProt" id="NX_Q9H3S7"/>
<dbReference type="OpenTargets" id="ENSG00000076201"/>
<dbReference type="Orphanet" id="528084">
    <property type="disease" value="Non-specific syndromic intellectual disability"/>
</dbReference>
<dbReference type="PharmGKB" id="PA33996"/>
<dbReference type="VEuPathDB" id="HostDB:ENSG00000076201"/>
<dbReference type="eggNOG" id="KOG0789">
    <property type="taxonomic scope" value="Eukaryota"/>
</dbReference>
<dbReference type="eggNOG" id="KOG2220">
    <property type="taxonomic scope" value="Eukaryota"/>
</dbReference>
<dbReference type="GeneTree" id="ENSGT00940000157687"/>
<dbReference type="HOGENOM" id="CLU_001129_0_0_1"/>
<dbReference type="InParanoid" id="Q9H3S7"/>
<dbReference type="OMA" id="HQRPLHM"/>
<dbReference type="OrthoDB" id="10266451at2759"/>
<dbReference type="PAN-GO" id="Q9H3S7">
    <property type="GO annotations" value="4 GO annotations based on evolutionary models"/>
</dbReference>
<dbReference type="PhylomeDB" id="Q9H3S7"/>
<dbReference type="TreeFam" id="TF323502"/>
<dbReference type="BRENDA" id="3.1.3.48">
    <property type="organism ID" value="2681"/>
</dbReference>
<dbReference type="PathwayCommons" id="Q9H3S7"/>
<dbReference type="Reactome" id="R-HSA-9008059">
    <property type="pathway name" value="Interleukin-37 signaling"/>
</dbReference>
<dbReference type="SignaLink" id="Q9H3S7"/>
<dbReference type="BioGRID-ORCS" id="25930">
    <property type="hits" value="707 hits in 1185 CRISPR screens"/>
</dbReference>
<dbReference type="CD-CODE" id="E8F4C1F2">
    <property type="entry name" value="Sint speckle"/>
</dbReference>
<dbReference type="CD-CODE" id="FB4E32DD">
    <property type="entry name" value="Presynaptic clusters and postsynaptic densities"/>
</dbReference>
<dbReference type="ChiTaRS" id="PTPN23">
    <property type="organism name" value="human"/>
</dbReference>
<dbReference type="EvolutionaryTrace" id="Q9H3S7"/>
<dbReference type="GeneWiki" id="PTPN23"/>
<dbReference type="GenomeRNAi" id="25930"/>
<dbReference type="Pharos" id="Q9H3S7">
    <property type="development level" value="Tbio"/>
</dbReference>
<dbReference type="PRO" id="PR:Q9H3S7"/>
<dbReference type="Proteomes" id="UP000005640">
    <property type="component" value="Chromosome 3"/>
</dbReference>
<dbReference type="RNAct" id="Q9H3S7">
    <property type="molecule type" value="protein"/>
</dbReference>
<dbReference type="Bgee" id="ENSG00000076201">
    <property type="expression patterns" value="Expressed in sural nerve and 161 other cell types or tissues"/>
</dbReference>
<dbReference type="ExpressionAtlas" id="Q9H3S7">
    <property type="expression patterns" value="baseline and differential"/>
</dbReference>
<dbReference type="GO" id="GO:0034451">
    <property type="term" value="C:centriolar satellite"/>
    <property type="evidence" value="ECO:0000314"/>
    <property type="project" value="HPA"/>
</dbReference>
<dbReference type="GO" id="GO:0036064">
    <property type="term" value="C:ciliary basal body"/>
    <property type="evidence" value="ECO:0000314"/>
    <property type="project" value="UniProtKB"/>
</dbReference>
<dbReference type="GO" id="GO:0005737">
    <property type="term" value="C:cytoplasm"/>
    <property type="evidence" value="ECO:0000314"/>
    <property type="project" value="UniProtKB"/>
</dbReference>
<dbReference type="GO" id="GO:0005829">
    <property type="term" value="C:cytosol"/>
    <property type="evidence" value="ECO:0000314"/>
    <property type="project" value="HPA"/>
</dbReference>
<dbReference type="GO" id="GO:0005769">
    <property type="term" value="C:early endosome"/>
    <property type="evidence" value="ECO:0000314"/>
    <property type="project" value="UniProtKB"/>
</dbReference>
<dbReference type="GO" id="GO:0005768">
    <property type="term" value="C:endosome"/>
    <property type="evidence" value="ECO:0000314"/>
    <property type="project" value="UniProtKB"/>
</dbReference>
<dbReference type="GO" id="GO:0070062">
    <property type="term" value="C:extracellular exosome"/>
    <property type="evidence" value="ECO:0007005"/>
    <property type="project" value="UniProtKB"/>
</dbReference>
<dbReference type="GO" id="GO:0043231">
    <property type="term" value="C:intracellular membrane-bounded organelle"/>
    <property type="evidence" value="ECO:0000314"/>
    <property type="project" value="HPA"/>
</dbReference>
<dbReference type="GO" id="GO:0016604">
    <property type="term" value="C:nuclear body"/>
    <property type="evidence" value="ECO:0000314"/>
    <property type="project" value="HPA"/>
</dbReference>
<dbReference type="GO" id="GO:0005654">
    <property type="term" value="C:nucleoplasm"/>
    <property type="evidence" value="ECO:0000314"/>
    <property type="project" value="HPA"/>
</dbReference>
<dbReference type="GO" id="GO:0005634">
    <property type="term" value="C:nucleus"/>
    <property type="evidence" value="ECO:0000314"/>
    <property type="project" value="UniProtKB"/>
</dbReference>
<dbReference type="GO" id="GO:0019901">
    <property type="term" value="F:protein kinase binding"/>
    <property type="evidence" value="ECO:0000353"/>
    <property type="project" value="UniProtKB"/>
</dbReference>
<dbReference type="GO" id="GO:0004725">
    <property type="term" value="F:protein tyrosine phosphatase activity"/>
    <property type="evidence" value="ECO:0000315"/>
    <property type="project" value="UniProtKB"/>
</dbReference>
<dbReference type="GO" id="GO:0060271">
    <property type="term" value="P:cilium assembly"/>
    <property type="evidence" value="ECO:0000315"/>
    <property type="project" value="UniProtKB"/>
</dbReference>
<dbReference type="GO" id="GO:0045022">
    <property type="term" value="P:early endosome to late endosome transport"/>
    <property type="evidence" value="ECO:0000315"/>
    <property type="project" value="FlyBase"/>
</dbReference>
<dbReference type="GO" id="GO:0032456">
    <property type="term" value="P:endocytic recycling"/>
    <property type="evidence" value="ECO:0000315"/>
    <property type="project" value="FlyBase"/>
</dbReference>
<dbReference type="GO" id="GO:0010633">
    <property type="term" value="P:negative regulation of epithelial cell migration"/>
    <property type="evidence" value="ECO:0000315"/>
    <property type="project" value="UniProtKB"/>
</dbReference>
<dbReference type="GO" id="GO:1903393">
    <property type="term" value="P:positive regulation of adherens junction organization"/>
    <property type="evidence" value="ECO:0000315"/>
    <property type="project" value="UniProtKB"/>
</dbReference>
<dbReference type="GO" id="GO:2000643">
    <property type="term" value="P:positive regulation of early endosome to late endosome transport"/>
    <property type="evidence" value="ECO:0000315"/>
    <property type="project" value="UniProtKB"/>
</dbReference>
<dbReference type="GO" id="GO:1903387">
    <property type="term" value="P:positive regulation of homophilic cell adhesion"/>
    <property type="evidence" value="ECO:0000315"/>
    <property type="project" value="UniProtKB"/>
</dbReference>
<dbReference type="GO" id="GO:0061357">
    <property type="term" value="P:positive regulation of Wnt protein secretion"/>
    <property type="evidence" value="ECO:0000315"/>
    <property type="project" value="FlyBase"/>
</dbReference>
<dbReference type="GO" id="GO:0043328">
    <property type="term" value="P:protein transport to vacuole involved in ubiquitin-dependent protein catabolic process via the multivesicular body sorting pathway"/>
    <property type="evidence" value="ECO:0000318"/>
    <property type="project" value="GO_Central"/>
</dbReference>
<dbReference type="GO" id="GO:0043162">
    <property type="term" value="P:ubiquitin-dependent protein catabolic process via the multivesicular body sorting pathway"/>
    <property type="evidence" value="ECO:0000315"/>
    <property type="project" value="UniProtKB"/>
</dbReference>
<dbReference type="CDD" id="cd09239">
    <property type="entry name" value="BRO1_HD-PTP_like"/>
    <property type="match status" value="1"/>
</dbReference>
<dbReference type="CDD" id="cd14539">
    <property type="entry name" value="PTP-N23"/>
    <property type="match status" value="1"/>
</dbReference>
<dbReference type="CDD" id="cd09234">
    <property type="entry name" value="V_HD-PTP_like"/>
    <property type="match status" value="1"/>
</dbReference>
<dbReference type="FunFam" id="1.25.40.280:FF:000002">
    <property type="entry name" value="Tyrosine-protein phosphatase non-receptor type 23"/>
    <property type="match status" value="1"/>
</dbReference>
<dbReference type="FunFam" id="3.90.190.10:FF:000061">
    <property type="entry name" value="tyrosine-protein phosphatase non-receptor type 23 isoform X1"/>
    <property type="match status" value="1"/>
</dbReference>
<dbReference type="Gene3D" id="1.20.120.560">
    <property type="entry name" value="alix/aip1 in complex with the ypdl late domain"/>
    <property type="match status" value="1"/>
</dbReference>
<dbReference type="Gene3D" id="1.20.140.50">
    <property type="entry name" value="alix/aip1 like domains"/>
    <property type="match status" value="1"/>
</dbReference>
<dbReference type="Gene3D" id="1.25.40.280">
    <property type="entry name" value="alix/aip1 like domains"/>
    <property type="match status" value="1"/>
</dbReference>
<dbReference type="Gene3D" id="3.90.190.10">
    <property type="entry name" value="Protein tyrosine phosphatase superfamily"/>
    <property type="match status" value="1"/>
</dbReference>
<dbReference type="InterPro" id="IPR025304">
    <property type="entry name" value="ALIX_V_dom"/>
</dbReference>
<dbReference type="InterPro" id="IPR004328">
    <property type="entry name" value="BRO1_dom"/>
</dbReference>
<dbReference type="InterPro" id="IPR038499">
    <property type="entry name" value="BRO1_sf"/>
</dbReference>
<dbReference type="InterPro" id="IPR029021">
    <property type="entry name" value="Prot-tyrosine_phosphatase-like"/>
</dbReference>
<dbReference type="InterPro" id="IPR000242">
    <property type="entry name" value="PTP_cat"/>
</dbReference>
<dbReference type="InterPro" id="IPR016130">
    <property type="entry name" value="Tyr_Pase_AS"/>
</dbReference>
<dbReference type="InterPro" id="IPR003595">
    <property type="entry name" value="Tyr_Pase_cat"/>
</dbReference>
<dbReference type="InterPro" id="IPR000387">
    <property type="entry name" value="Tyr_Pase_dom"/>
</dbReference>
<dbReference type="PANTHER" id="PTHR23030">
    <property type="entry name" value="PCD6 INTERACTING PROTEIN-RELATED"/>
    <property type="match status" value="1"/>
</dbReference>
<dbReference type="PANTHER" id="PTHR23030:SF30">
    <property type="entry name" value="TYROSINE-PROTEIN PHOSPHATASE NON-RECEPTOR TYPE 23"/>
    <property type="match status" value="1"/>
</dbReference>
<dbReference type="Pfam" id="PF13949">
    <property type="entry name" value="ALIX_LYPXL_bnd"/>
    <property type="match status" value="1"/>
</dbReference>
<dbReference type="Pfam" id="PF03097">
    <property type="entry name" value="BRO1"/>
    <property type="match status" value="1"/>
</dbReference>
<dbReference type="Pfam" id="PF00102">
    <property type="entry name" value="Y_phosphatase"/>
    <property type="match status" value="1"/>
</dbReference>
<dbReference type="PRINTS" id="PR00700">
    <property type="entry name" value="PRTYPHPHTASE"/>
</dbReference>
<dbReference type="SMART" id="SM01041">
    <property type="entry name" value="BRO1"/>
    <property type="match status" value="1"/>
</dbReference>
<dbReference type="SMART" id="SM00194">
    <property type="entry name" value="PTPc"/>
    <property type="match status" value="1"/>
</dbReference>
<dbReference type="SMART" id="SM00404">
    <property type="entry name" value="PTPc_motif"/>
    <property type="match status" value="1"/>
</dbReference>
<dbReference type="SUPFAM" id="SSF52799">
    <property type="entry name" value="(Phosphotyrosine protein) phosphatases II"/>
    <property type="match status" value="1"/>
</dbReference>
<dbReference type="PROSITE" id="PS51180">
    <property type="entry name" value="BRO1"/>
    <property type="match status" value="1"/>
</dbReference>
<dbReference type="PROSITE" id="PS00383">
    <property type="entry name" value="TYR_PHOSPHATASE_1"/>
    <property type="match status" value="1"/>
</dbReference>
<dbReference type="PROSITE" id="PS50056">
    <property type="entry name" value="TYR_PHOSPHATASE_2"/>
    <property type="match status" value="1"/>
</dbReference>
<dbReference type="PROSITE" id="PS50055">
    <property type="entry name" value="TYR_PHOSPHATASE_PTP"/>
    <property type="match status" value="1"/>
</dbReference>